<reference key="1">
    <citation type="submission" date="2008-04" db="EMBL/GenBank/DDBJ databases">
        <title>Complete sequence of Yersinia pseudotuberculosis PB1/+.</title>
        <authorList>
            <person name="Copeland A."/>
            <person name="Lucas S."/>
            <person name="Lapidus A."/>
            <person name="Glavina del Rio T."/>
            <person name="Dalin E."/>
            <person name="Tice H."/>
            <person name="Bruce D."/>
            <person name="Goodwin L."/>
            <person name="Pitluck S."/>
            <person name="Munk A.C."/>
            <person name="Brettin T."/>
            <person name="Detter J.C."/>
            <person name="Han C."/>
            <person name="Tapia R."/>
            <person name="Schmutz J."/>
            <person name="Larimer F."/>
            <person name="Land M."/>
            <person name="Hauser L."/>
            <person name="Challacombe J.F."/>
            <person name="Green L."/>
            <person name="Lindler L.E."/>
            <person name="Nikolich M.P."/>
            <person name="Richardson P."/>
        </authorList>
    </citation>
    <scope>NUCLEOTIDE SEQUENCE [LARGE SCALE GENOMIC DNA]</scope>
    <source>
        <strain>PB1/+</strain>
    </source>
</reference>
<sequence>MIPVIALVGRPNVGKSTLFNRLTHTRDALVADFPGLTRDRKYGRAEVEGHEFIVVDTGGIDGTEDGVETKMAGQSLLAIEEADIVLFMVDARAGLMPADQGIAQHLRSREKATFLVANKTDGIDPDTATADFYSLGLGEVHAIAASHGRGVTQLIEDVMAPYMDAEEPEVELTDEEENAAYWAEQEAQGEDVPPEDPEDDFDPRTLPIKLAIVGRPNVGKSTLTNRILGEDRVVVYDMPGTTRDSIYIPMTRDDREYILIDTAGVRKRGKITETVEKFSVIKTLQAIEDSNVVLLVIDARDGISDQDLSLLGFILNSGRSLVIAVNKWDGMTEEARAQVKDMLDLRLGFVDFARIHFISALHGSGVGNLFESVQEAYDCSTKRVGTSLLTRIMQMAEEDHQPPLVRGRRVKLKYAHAGGYNPPIVVIHGNQVTDLSDSYKRYLMNYFRRSLKVMGTPIRIQFKEGENPFAGKRNPLTPNQMRKRKRLMSHLKKGK</sequence>
<comment type="function">
    <text evidence="1">GTPase that plays an essential role in the late steps of ribosome biogenesis.</text>
</comment>
<comment type="subunit">
    <text evidence="1">Associates with the 50S ribosomal subunit.</text>
</comment>
<comment type="similarity">
    <text evidence="1">Belongs to the TRAFAC class TrmE-Era-EngA-EngB-Septin-like GTPase superfamily. EngA (Der) GTPase family.</text>
</comment>
<evidence type="ECO:0000255" key="1">
    <source>
        <dbReference type="HAMAP-Rule" id="MF_00195"/>
    </source>
</evidence>
<protein>
    <recommendedName>
        <fullName evidence="1">GTPase Der</fullName>
    </recommendedName>
    <alternativeName>
        <fullName evidence="1">GTP-binding protein EngA</fullName>
    </alternativeName>
</protein>
<keyword id="KW-0342">GTP-binding</keyword>
<keyword id="KW-0547">Nucleotide-binding</keyword>
<keyword id="KW-0677">Repeat</keyword>
<keyword id="KW-0690">Ribosome biogenesis</keyword>
<name>DER_YERPB</name>
<proteinExistence type="inferred from homology"/>
<organism>
    <name type="scientific">Yersinia pseudotuberculosis serotype IB (strain PB1/+)</name>
    <dbReference type="NCBI Taxonomy" id="502801"/>
    <lineage>
        <taxon>Bacteria</taxon>
        <taxon>Pseudomonadati</taxon>
        <taxon>Pseudomonadota</taxon>
        <taxon>Gammaproteobacteria</taxon>
        <taxon>Enterobacterales</taxon>
        <taxon>Yersiniaceae</taxon>
        <taxon>Yersinia</taxon>
    </lineage>
</organism>
<dbReference type="EMBL" id="CP001048">
    <property type="protein sequence ID" value="ACC89903.1"/>
    <property type="molecule type" value="Genomic_DNA"/>
</dbReference>
<dbReference type="RefSeq" id="WP_011192800.1">
    <property type="nucleotide sequence ID" value="NZ_CP009780.1"/>
</dbReference>
<dbReference type="SMR" id="B2K9P6"/>
<dbReference type="KEGG" id="ypb:YPTS_2946"/>
<dbReference type="PATRIC" id="fig|502801.10.peg.2376"/>
<dbReference type="GO" id="GO:0005525">
    <property type="term" value="F:GTP binding"/>
    <property type="evidence" value="ECO:0007669"/>
    <property type="project" value="UniProtKB-UniRule"/>
</dbReference>
<dbReference type="GO" id="GO:0043022">
    <property type="term" value="F:ribosome binding"/>
    <property type="evidence" value="ECO:0007669"/>
    <property type="project" value="TreeGrafter"/>
</dbReference>
<dbReference type="GO" id="GO:0042254">
    <property type="term" value="P:ribosome biogenesis"/>
    <property type="evidence" value="ECO:0007669"/>
    <property type="project" value="UniProtKB-KW"/>
</dbReference>
<dbReference type="CDD" id="cd01894">
    <property type="entry name" value="EngA1"/>
    <property type="match status" value="1"/>
</dbReference>
<dbReference type="CDD" id="cd01895">
    <property type="entry name" value="EngA2"/>
    <property type="match status" value="1"/>
</dbReference>
<dbReference type="FunFam" id="3.30.300.20:FF:000004">
    <property type="entry name" value="GTPase Der"/>
    <property type="match status" value="1"/>
</dbReference>
<dbReference type="FunFam" id="3.40.50.300:FF:000040">
    <property type="entry name" value="GTPase Der"/>
    <property type="match status" value="1"/>
</dbReference>
<dbReference type="FunFam" id="3.40.50.300:FF:000057">
    <property type="entry name" value="GTPase Der"/>
    <property type="match status" value="1"/>
</dbReference>
<dbReference type="Gene3D" id="3.30.300.20">
    <property type="match status" value="1"/>
</dbReference>
<dbReference type="Gene3D" id="3.40.50.300">
    <property type="entry name" value="P-loop containing nucleotide triphosphate hydrolases"/>
    <property type="match status" value="2"/>
</dbReference>
<dbReference type="HAMAP" id="MF_00195">
    <property type="entry name" value="GTPase_Der"/>
    <property type="match status" value="1"/>
</dbReference>
<dbReference type="InterPro" id="IPR031166">
    <property type="entry name" value="G_ENGA"/>
</dbReference>
<dbReference type="InterPro" id="IPR006073">
    <property type="entry name" value="GTP-bd"/>
</dbReference>
<dbReference type="InterPro" id="IPR016484">
    <property type="entry name" value="GTPase_Der"/>
</dbReference>
<dbReference type="InterPro" id="IPR032859">
    <property type="entry name" value="KH_dom-like"/>
</dbReference>
<dbReference type="InterPro" id="IPR015946">
    <property type="entry name" value="KH_dom-like_a/b"/>
</dbReference>
<dbReference type="InterPro" id="IPR027417">
    <property type="entry name" value="P-loop_NTPase"/>
</dbReference>
<dbReference type="InterPro" id="IPR005225">
    <property type="entry name" value="Small_GTP-bd"/>
</dbReference>
<dbReference type="NCBIfam" id="TIGR03594">
    <property type="entry name" value="GTPase_EngA"/>
    <property type="match status" value="1"/>
</dbReference>
<dbReference type="NCBIfam" id="TIGR00231">
    <property type="entry name" value="small_GTP"/>
    <property type="match status" value="2"/>
</dbReference>
<dbReference type="PANTHER" id="PTHR43834">
    <property type="entry name" value="GTPASE DER"/>
    <property type="match status" value="1"/>
</dbReference>
<dbReference type="PANTHER" id="PTHR43834:SF6">
    <property type="entry name" value="GTPASE DER"/>
    <property type="match status" value="1"/>
</dbReference>
<dbReference type="Pfam" id="PF14714">
    <property type="entry name" value="KH_dom-like"/>
    <property type="match status" value="1"/>
</dbReference>
<dbReference type="Pfam" id="PF01926">
    <property type="entry name" value="MMR_HSR1"/>
    <property type="match status" value="2"/>
</dbReference>
<dbReference type="PIRSF" id="PIRSF006485">
    <property type="entry name" value="GTP-binding_EngA"/>
    <property type="match status" value="1"/>
</dbReference>
<dbReference type="PRINTS" id="PR00326">
    <property type="entry name" value="GTP1OBG"/>
</dbReference>
<dbReference type="SUPFAM" id="SSF52540">
    <property type="entry name" value="P-loop containing nucleoside triphosphate hydrolases"/>
    <property type="match status" value="2"/>
</dbReference>
<dbReference type="PROSITE" id="PS51712">
    <property type="entry name" value="G_ENGA"/>
    <property type="match status" value="2"/>
</dbReference>
<accession>B2K9P6</accession>
<feature type="chain" id="PRO_1000099183" description="GTPase Der">
    <location>
        <begin position="1"/>
        <end position="495"/>
    </location>
</feature>
<feature type="domain" description="EngA-type G 1">
    <location>
        <begin position="3"/>
        <end position="166"/>
    </location>
</feature>
<feature type="domain" description="EngA-type G 2">
    <location>
        <begin position="208"/>
        <end position="381"/>
    </location>
</feature>
<feature type="domain" description="KH-like" evidence="1">
    <location>
        <begin position="382"/>
        <end position="466"/>
    </location>
</feature>
<feature type="binding site" evidence="1">
    <location>
        <begin position="9"/>
        <end position="16"/>
    </location>
    <ligand>
        <name>GTP</name>
        <dbReference type="ChEBI" id="CHEBI:37565"/>
        <label>1</label>
    </ligand>
</feature>
<feature type="binding site" evidence="1">
    <location>
        <begin position="56"/>
        <end position="60"/>
    </location>
    <ligand>
        <name>GTP</name>
        <dbReference type="ChEBI" id="CHEBI:37565"/>
        <label>1</label>
    </ligand>
</feature>
<feature type="binding site" evidence="1">
    <location>
        <begin position="118"/>
        <end position="121"/>
    </location>
    <ligand>
        <name>GTP</name>
        <dbReference type="ChEBI" id="CHEBI:37565"/>
        <label>1</label>
    </ligand>
</feature>
<feature type="binding site" evidence="1">
    <location>
        <begin position="214"/>
        <end position="221"/>
    </location>
    <ligand>
        <name>GTP</name>
        <dbReference type="ChEBI" id="CHEBI:37565"/>
        <label>2</label>
    </ligand>
</feature>
<feature type="binding site" evidence="1">
    <location>
        <begin position="261"/>
        <end position="265"/>
    </location>
    <ligand>
        <name>GTP</name>
        <dbReference type="ChEBI" id="CHEBI:37565"/>
        <label>2</label>
    </ligand>
</feature>
<feature type="binding site" evidence="1">
    <location>
        <begin position="326"/>
        <end position="329"/>
    </location>
    <ligand>
        <name>GTP</name>
        <dbReference type="ChEBI" id="CHEBI:37565"/>
        <label>2</label>
    </ligand>
</feature>
<gene>
    <name evidence="1" type="primary">der</name>
    <name type="synonym">engA</name>
    <name type="ordered locus">YPTS_2946</name>
</gene>